<comment type="function">
    <text evidence="1">Hydrolyzes ribosome-free peptidyl-tRNAs (with 1 or more amino acids incorporated), which drop off the ribosome during protein synthesis, or as a result of ribosome stalling.</text>
</comment>
<comment type="function">
    <text evidence="1">Catalyzes the release of premature peptidyl moieties from peptidyl-tRNA molecules trapped in stalled 50S ribosomal subunits, and thus maintains levels of free tRNAs and 50S ribosomes.</text>
</comment>
<comment type="catalytic activity">
    <reaction evidence="1">
        <text>an N-acyl-L-alpha-aminoacyl-tRNA + H2O = an N-acyl-L-amino acid + a tRNA + H(+)</text>
        <dbReference type="Rhea" id="RHEA:54448"/>
        <dbReference type="Rhea" id="RHEA-COMP:10123"/>
        <dbReference type="Rhea" id="RHEA-COMP:13883"/>
        <dbReference type="ChEBI" id="CHEBI:15377"/>
        <dbReference type="ChEBI" id="CHEBI:15378"/>
        <dbReference type="ChEBI" id="CHEBI:59874"/>
        <dbReference type="ChEBI" id="CHEBI:78442"/>
        <dbReference type="ChEBI" id="CHEBI:138191"/>
        <dbReference type="EC" id="3.1.1.29"/>
    </reaction>
</comment>
<comment type="subunit">
    <text evidence="1">Monomer.</text>
</comment>
<comment type="subcellular location">
    <subcellularLocation>
        <location evidence="1">Cytoplasm</location>
    </subcellularLocation>
</comment>
<comment type="similarity">
    <text evidence="1">Belongs to the PTH family.</text>
</comment>
<gene>
    <name evidence="1" type="primary">pth</name>
    <name type="ordered locus">GSU0663</name>
</gene>
<protein>
    <recommendedName>
        <fullName evidence="1">Peptidyl-tRNA hydrolase</fullName>
        <shortName evidence="1">Pth</shortName>
        <ecNumber evidence="1">3.1.1.29</ecNumber>
    </recommendedName>
</protein>
<accession>Q74FE6</accession>
<proteinExistence type="inferred from homology"/>
<evidence type="ECO:0000255" key="1">
    <source>
        <dbReference type="HAMAP-Rule" id="MF_00083"/>
    </source>
</evidence>
<name>PTH_GEOSL</name>
<organism>
    <name type="scientific">Geobacter sulfurreducens (strain ATCC 51573 / DSM 12127 / PCA)</name>
    <dbReference type="NCBI Taxonomy" id="243231"/>
    <lineage>
        <taxon>Bacteria</taxon>
        <taxon>Pseudomonadati</taxon>
        <taxon>Thermodesulfobacteriota</taxon>
        <taxon>Desulfuromonadia</taxon>
        <taxon>Geobacterales</taxon>
        <taxon>Geobacteraceae</taxon>
        <taxon>Geobacter</taxon>
    </lineage>
</organism>
<keyword id="KW-0963">Cytoplasm</keyword>
<keyword id="KW-0378">Hydrolase</keyword>
<keyword id="KW-1185">Reference proteome</keyword>
<keyword id="KW-0694">RNA-binding</keyword>
<keyword id="KW-0820">tRNA-binding</keyword>
<sequence>MATKLIVGLGNPGPKYLWTRHNAGFMVLDRLAHAIGASVTRKSFSGVFGEGAWHGERLLLLKPQTYMNLSGRSVAEALRFHKLPLCDTIVIHDDLDIPFGRVKVKEGGGHGGHNGLRSLVQELGGAGFVRVRVGIGRPVHGDVVNYVLTNFSQDEMADLAHLLDGTLDLLESLLTAGLPKTMSLYNNKDLLAP</sequence>
<feature type="chain" id="PRO_0000187743" description="Peptidyl-tRNA hydrolase">
    <location>
        <begin position="1"/>
        <end position="193"/>
    </location>
</feature>
<feature type="active site" description="Proton acceptor" evidence="1">
    <location>
        <position position="21"/>
    </location>
</feature>
<feature type="binding site" evidence="1">
    <location>
        <position position="16"/>
    </location>
    <ligand>
        <name>tRNA</name>
        <dbReference type="ChEBI" id="CHEBI:17843"/>
    </ligand>
</feature>
<feature type="binding site" evidence="1">
    <location>
        <position position="66"/>
    </location>
    <ligand>
        <name>tRNA</name>
        <dbReference type="ChEBI" id="CHEBI:17843"/>
    </ligand>
</feature>
<feature type="binding site" evidence="1">
    <location>
        <position position="68"/>
    </location>
    <ligand>
        <name>tRNA</name>
        <dbReference type="ChEBI" id="CHEBI:17843"/>
    </ligand>
</feature>
<feature type="binding site" evidence="1">
    <location>
        <position position="114"/>
    </location>
    <ligand>
        <name>tRNA</name>
        <dbReference type="ChEBI" id="CHEBI:17843"/>
    </ligand>
</feature>
<feature type="site" description="Discriminates between blocked and unblocked aminoacyl-tRNA" evidence="1">
    <location>
        <position position="11"/>
    </location>
</feature>
<feature type="site" description="Stabilizes the basic form of H active site to accept a proton" evidence="1">
    <location>
        <position position="93"/>
    </location>
</feature>
<dbReference type="EC" id="3.1.1.29" evidence="1"/>
<dbReference type="EMBL" id="AE017180">
    <property type="protein sequence ID" value="AAR33993.1"/>
    <property type="molecule type" value="Genomic_DNA"/>
</dbReference>
<dbReference type="RefSeq" id="NP_951720.1">
    <property type="nucleotide sequence ID" value="NC_002939.5"/>
</dbReference>
<dbReference type="RefSeq" id="WP_010941324.1">
    <property type="nucleotide sequence ID" value="NC_002939.5"/>
</dbReference>
<dbReference type="SMR" id="Q74FE6"/>
<dbReference type="FunCoup" id="Q74FE6">
    <property type="interactions" value="389"/>
</dbReference>
<dbReference type="STRING" id="243231.GSU0663"/>
<dbReference type="EnsemblBacteria" id="AAR33993">
    <property type="protein sequence ID" value="AAR33993"/>
    <property type="gene ID" value="GSU0663"/>
</dbReference>
<dbReference type="KEGG" id="gsu:GSU0663"/>
<dbReference type="PATRIC" id="fig|243231.5.peg.659"/>
<dbReference type="eggNOG" id="COG0193">
    <property type="taxonomic scope" value="Bacteria"/>
</dbReference>
<dbReference type="HOGENOM" id="CLU_062456_4_1_7"/>
<dbReference type="InParanoid" id="Q74FE6"/>
<dbReference type="OrthoDB" id="9800507at2"/>
<dbReference type="Proteomes" id="UP000000577">
    <property type="component" value="Chromosome"/>
</dbReference>
<dbReference type="GO" id="GO:0005737">
    <property type="term" value="C:cytoplasm"/>
    <property type="evidence" value="ECO:0007669"/>
    <property type="project" value="UniProtKB-SubCell"/>
</dbReference>
<dbReference type="GO" id="GO:0004045">
    <property type="term" value="F:peptidyl-tRNA hydrolase activity"/>
    <property type="evidence" value="ECO:0000318"/>
    <property type="project" value="GO_Central"/>
</dbReference>
<dbReference type="GO" id="GO:0000049">
    <property type="term" value="F:tRNA binding"/>
    <property type="evidence" value="ECO:0007669"/>
    <property type="project" value="UniProtKB-UniRule"/>
</dbReference>
<dbReference type="GO" id="GO:0006515">
    <property type="term" value="P:protein quality control for misfolded or incompletely synthesized proteins"/>
    <property type="evidence" value="ECO:0007669"/>
    <property type="project" value="UniProtKB-UniRule"/>
</dbReference>
<dbReference type="GO" id="GO:0072344">
    <property type="term" value="P:rescue of stalled ribosome"/>
    <property type="evidence" value="ECO:0007669"/>
    <property type="project" value="UniProtKB-UniRule"/>
</dbReference>
<dbReference type="CDD" id="cd00462">
    <property type="entry name" value="PTH"/>
    <property type="match status" value="1"/>
</dbReference>
<dbReference type="FunFam" id="3.40.50.1470:FF:000001">
    <property type="entry name" value="Peptidyl-tRNA hydrolase"/>
    <property type="match status" value="1"/>
</dbReference>
<dbReference type="Gene3D" id="3.40.50.1470">
    <property type="entry name" value="Peptidyl-tRNA hydrolase"/>
    <property type="match status" value="1"/>
</dbReference>
<dbReference type="HAMAP" id="MF_00083">
    <property type="entry name" value="Pept_tRNA_hydro_bact"/>
    <property type="match status" value="1"/>
</dbReference>
<dbReference type="InterPro" id="IPR001328">
    <property type="entry name" value="Pept_tRNA_hydro"/>
</dbReference>
<dbReference type="InterPro" id="IPR018171">
    <property type="entry name" value="Pept_tRNA_hydro_CS"/>
</dbReference>
<dbReference type="InterPro" id="IPR036416">
    <property type="entry name" value="Pept_tRNA_hydro_sf"/>
</dbReference>
<dbReference type="NCBIfam" id="TIGR00447">
    <property type="entry name" value="pth"/>
    <property type="match status" value="1"/>
</dbReference>
<dbReference type="PANTHER" id="PTHR17224">
    <property type="entry name" value="PEPTIDYL-TRNA HYDROLASE"/>
    <property type="match status" value="1"/>
</dbReference>
<dbReference type="PANTHER" id="PTHR17224:SF1">
    <property type="entry name" value="PEPTIDYL-TRNA HYDROLASE"/>
    <property type="match status" value="1"/>
</dbReference>
<dbReference type="Pfam" id="PF01195">
    <property type="entry name" value="Pept_tRNA_hydro"/>
    <property type="match status" value="1"/>
</dbReference>
<dbReference type="SUPFAM" id="SSF53178">
    <property type="entry name" value="Peptidyl-tRNA hydrolase-like"/>
    <property type="match status" value="1"/>
</dbReference>
<dbReference type="PROSITE" id="PS01195">
    <property type="entry name" value="PEPT_TRNA_HYDROL_1"/>
    <property type="match status" value="1"/>
</dbReference>
<dbReference type="PROSITE" id="PS01196">
    <property type="entry name" value="PEPT_TRNA_HYDROL_2"/>
    <property type="match status" value="1"/>
</dbReference>
<reference key="1">
    <citation type="journal article" date="2003" name="Science">
        <title>Genome of Geobacter sulfurreducens: metal reduction in subsurface environments.</title>
        <authorList>
            <person name="Methe B.A."/>
            <person name="Nelson K.E."/>
            <person name="Eisen J.A."/>
            <person name="Paulsen I.T."/>
            <person name="Nelson W.C."/>
            <person name="Heidelberg J.F."/>
            <person name="Wu D."/>
            <person name="Wu M."/>
            <person name="Ward N.L."/>
            <person name="Beanan M.J."/>
            <person name="Dodson R.J."/>
            <person name="Madupu R."/>
            <person name="Brinkac L.M."/>
            <person name="Daugherty S.C."/>
            <person name="DeBoy R.T."/>
            <person name="Durkin A.S."/>
            <person name="Gwinn M.L."/>
            <person name="Kolonay J.F."/>
            <person name="Sullivan S.A."/>
            <person name="Haft D.H."/>
            <person name="Selengut J."/>
            <person name="Davidsen T.M."/>
            <person name="Zafar N."/>
            <person name="White O."/>
            <person name="Tran B."/>
            <person name="Romero C."/>
            <person name="Forberger H.A."/>
            <person name="Weidman J.F."/>
            <person name="Khouri H.M."/>
            <person name="Feldblyum T.V."/>
            <person name="Utterback T.R."/>
            <person name="Van Aken S.E."/>
            <person name="Lovley D.R."/>
            <person name="Fraser C.M."/>
        </authorList>
    </citation>
    <scope>NUCLEOTIDE SEQUENCE [LARGE SCALE GENOMIC DNA]</scope>
    <source>
        <strain>ATCC 51573 / DSM 12127 / PCA</strain>
    </source>
</reference>